<comment type="function">
    <text evidence="1">Plays several roles during the time course of infection, including egress of virus particles from the perinuclear space and secondary envelopment of cytoplasmic capsids that bud into specific trans-Golgi network (TGN)-derived membranes.</text>
</comment>
<comment type="subunit">
    <text evidence="1 2">Oligomerizes. Interacts with UL7; this interaction mediates UL7 incorporation to virions.</text>
</comment>
<comment type="subcellular location">
    <subcellularLocation>
        <location evidence="1">Virion tegument</location>
    </subcellularLocation>
    <subcellularLocation>
        <location evidence="1">Host cytoplasm</location>
    </subcellularLocation>
    <subcellularLocation>
        <location evidence="1">Host Golgi apparatus</location>
    </subcellularLocation>
</comment>
<comment type="PTM">
    <text evidence="1">Phosphorylated.</text>
</comment>
<comment type="PTM">
    <text evidence="1">Palmitoylation is necessary for Golgi localization.</text>
</comment>
<comment type="similarity">
    <text evidence="4">Belongs to the herpesviridae UL51 family.</text>
</comment>
<accession>P89470</accession>
<gene>
    <name type="ORF">UL51</name>
</gene>
<dbReference type="EMBL" id="Z86099">
    <property type="protein sequence ID" value="CAB06738.1"/>
    <property type="molecule type" value="Genomic_DNA"/>
</dbReference>
<dbReference type="RefSeq" id="YP_009137204.1">
    <property type="nucleotide sequence ID" value="NC_001798.2"/>
</dbReference>
<dbReference type="SMR" id="P89470"/>
<dbReference type="DNASU" id="1487340"/>
<dbReference type="GeneID" id="1487340"/>
<dbReference type="KEGG" id="vg:1487340"/>
<dbReference type="Proteomes" id="UP000001874">
    <property type="component" value="Segment"/>
</dbReference>
<dbReference type="GO" id="GO:0044177">
    <property type="term" value="C:host cell Golgi apparatus"/>
    <property type="evidence" value="ECO:0007669"/>
    <property type="project" value="UniProtKB-SubCell"/>
</dbReference>
<dbReference type="GO" id="GO:0019033">
    <property type="term" value="C:viral tegument"/>
    <property type="evidence" value="ECO:0007669"/>
    <property type="project" value="UniProtKB-SubCell"/>
</dbReference>
<dbReference type="InterPro" id="IPR007625">
    <property type="entry name" value="Herpes_UL51"/>
</dbReference>
<dbReference type="Pfam" id="PF04540">
    <property type="entry name" value="Herpes_UL51"/>
    <property type="match status" value="1"/>
</dbReference>
<organism>
    <name type="scientific">Human herpesvirus 2 (strain HG52)</name>
    <name type="common">HHV-2</name>
    <name type="synonym">Human herpes simplex virus 2</name>
    <dbReference type="NCBI Taxonomy" id="10315"/>
    <lineage>
        <taxon>Viruses</taxon>
        <taxon>Duplodnaviria</taxon>
        <taxon>Heunggongvirae</taxon>
        <taxon>Peploviricota</taxon>
        <taxon>Herviviricetes</taxon>
        <taxon>Herpesvirales</taxon>
        <taxon>Orthoherpesviridae</taxon>
        <taxon>Alphaherpesvirinae</taxon>
        <taxon>Simplexvirus</taxon>
        <taxon>Simplexvirus humanalpha2</taxon>
        <taxon>Human herpesvirus 2</taxon>
    </lineage>
</organism>
<reference key="1">
    <citation type="journal article" date="1998" name="J. Virol.">
        <title>The genome sequence of herpes simplex virus type 2.</title>
        <authorList>
            <person name="Dolan A."/>
            <person name="Jamieson F.E."/>
            <person name="Cunningham C."/>
            <person name="Barnett B.C."/>
            <person name="McGeoch D.J."/>
        </authorList>
    </citation>
    <scope>NUCLEOTIDE SEQUENCE [LARGE SCALE GENOMIC DNA]</scope>
</reference>
<proteinExistence type="inferred from homology"/>
<name>TEG7_HHV2H</name>
<keyword id="KW-1035">Host cytoplasm</keyword>
<keyword id="KW-1040">Host Golgi apparatus</keyword>
<keyword id="KW-0449">Lipoprotein</keyword>
<keyword id="KW-0564">Palmitate</keyword>
<keyword id="KW-0597">Phosphoprotein</keyword>
<keyword id="KW-1185">Reference proteome</keyword>
<keyword id="KW-0946">Virion</keyword>
<keyword id="KW-0920">Virion tegument</keyword>
<evidence type="ECO:0000250" key="1">
    <source>
        <dbReference type="UniProtKB" id="P10235"/>
    </source>
</evidence>
<evidence type="ECO:0000250" key="2">
    <source>
        <dbReference type="UniProtKB" id="P16823"/>
    </source>
</evidence>
<evidence type="ECO:0000256" key="3">
    <source>
        <dbReference type="SAM" id="MobiDB-lite"/>
    </source>
</evidence>
<evidence type="ECO:0000305" key="4"/>
<sequence length="244" mass="25654">MASLLGVLCGWGTRPEEQQYEMIRAAAPPSEAEPRLQEALAVVNALLPAPITLDDALESLDDTRRLVKARALARTYHACMVNLERLARHHPGLEGSTIDGAVAAHRDKMRRLADTCMATILQMYMSVGAADKSADVLVSQAIRSMAESDVVMEDVAIAERALGLSTSALAGGTRTAGLGATEAPPGPTRAQAPEVASVPVTHAGDRSPVRPGPVPPADPTPDPRHRTSAPKRQASSTEAPLLLA</sequence>
<organismHost>
    <name type="scientific">Homo sapiens</name>
    <name type="common">Human</name>
    <dbReference type="NCBI Taxonomy" id="9606"/>
</organismHost>
<protein>
    <recommendedName>
        <fullName>Tegument protein UL51</fullName>
    </recommendedName>
</protein>
<feature type="chain" id="PRO_0000385157" description="Tegument protein UL51">
    <location>
        <begin position="1"/>
        <end position="244"/>
    </location>
</feature>
<feature type="region of interest" description="Disordered" evidence="3">
    <location>
        <begin position="175"/>
        <end position="244"/>
    </location>
</feature>
<feature type="compositionally biased region" description="Pro residues" evidence="3">
    <location>
        <begin position="210"/>
        <end position="220"/>
    </location>
</feature>
<feature type="lipid moiety-binding region" description="S-palmitoyl cysteine; by host" evidence="1">
    <location>
        <position position="9"/>
    </location>
</feature>